<protein>
    <recommendedName>
        <fullName evidence="1">tRNA-2-methylthio-N(6)-dimethylallyladenosine synthase</fullName>
        <ecNumber evidence="1">2.8.4.3</ecNumber>
    </recommendedName>
    <alternativeName>
        <fullName evidence="1">(Dimethylallyl)adenosine tRNA methylthiotransferase MiaB</fullName>
    </alternativeName>
    <alternativeName>
        <fullName evidence="1">tRNA-i(6)A37 methylthiotransferase</fullName>
    </alternativeName>
</protein>
<organism>
    <name type="scientific">Acinetobacter baumannii (strain AB0057)</name>
    <dbReference type="NCBI Taxonomy" id="480119"/>
    <lineage>
        <taxon>Bacteria</taxon>
        <taxon>Pseudomonadati</taxon>
        <taxon>Pseudomonadota</taxon>
        <taxon>Gammaproteobacteria</taxon>
        <taxon>Moraxellales</taxon>
        <taxon>Moraxellaceae</taxon>
        <taxon>Acinetobacter</taxon>
        <taxon>Acinetobacter calcoaceticus/baumannii complex</taxon>
    </lineage>
</organism>
<name>MIAB_ACIB5</name>
<feature type="chain" id="PRO_0000374087" description="tRNA-2-methylthio-N(6)-dimethylallyladenosine synthase">
    <location>
        <begin position="1"/>
        <end position="483"/>
    </location>
</feature>
<feature type="domain" description="MTTase N-terminal" evidence="1">
    <location>
        <begin position="31"/>
        <end position="148"/>
    </location>
</feature>
<feature type="domain" description="Radical SAM core" evidence="2">
    <location>
        <begin position="178"/>
        <end position="410"/>
    </location>
</feature>
<feature type="domain" description="TRAM" evidence="1">
    <location>
        <begin position="413"/>
        <end position="477"/>
    </location>
</feature>
<feature type="binding site" evidence="1">
    <location>
        <position position="40"/>
    </location>
    <ligand>
        <name>[4Fe-4S] cluster</name>
        <dbReference type="ChEBI" id="CHEBI:49883"/>
        <label>1</label>
    </ligand>
</feature>
<feature type="binding site" evidence="1">
    <location>
        <position position="77"/>
    </location>
    <ligand>
        <name>[4Fe-4S] cluster</name>
        <dbReference type="ChEBI" id="CHEBI:49883"/>
        <label>1</label>
    </ligand>
</feature>
<feature type="binding site" evidence="1">
    <location>
        <position position="111"/>
    </location>
    <ligand>
        <name>[4Fe-4S] cluster</name>
        <dbReference type="ChEBI" id="CHEBI:49883"/>
        <label>1</label>
    </ligand>
</feature>
<feature type="binding site" evidence="1">
    <location>
        <position position="192"/>
    </location>
    <ligand>
        <name>[4Fe-4S] cluster</name>
        <dbReference type="ChEBI" id="CHEBI:49883"/>
        <label>2</label>
        <note>4Fe-4S-S-AdoMet</note>
    </ligand>
</feature>
<feature type="binding site" evidence="1">
    <location>
        <position position="196"/>
    </location>
    <ligand>
        <name>[4Fe-4S] cluster</name>
        <dbReference type="ChEBI" id="CHEBI:49883"/>
        <label>2</label>
        <note>4Fe-4S-S-AdoMet</note>
    </ligand>
</feature>
<feature type="binding site" evidence="1">
    <location>
        <position position="199"/>
    </location>
    <ligand>
        <name>[4Fe-4S] cluster</name>
        <dbReference type="ChEBI" id="CHEBI:49883"/>
        <label>2</label>
        <note>4Fe-4S-S-AdoMet</note>
    </ligand>
</feature>
<keyword id="KW-0004">4Fe-4S</keyword>
<keyword id="KW-0963">Cytoplasm</keyword>
<keyword id="KW-0408">Iron</keyword>
<keyword id="KW-0411">Iron-sulfur</keyword>
<keyword id="KW-0479">Metal-binding</keyword>
<keyword id="KW-0949">S-adenosyl-L-methionine</keyword>
<keyword id="KW-0808">Transferase</keyword>
<keyword id="KW-0819">tRNA processing</keyword>
<proteinExistence type="inferred from homology"/>
<gene>
    <name evidence="1" type="primary">miaB</name>
    <name type="ordered locus">AB57_3477</name>
</gene>
<reference key="1">
    <citation type="journal article" date="2008" name="J. Bacteriol.">
        <title>Comparative genome sequence analysis of multidrug-resistant Acinetobacter baumannii.</title>
        <authorList>
            <person name="Adams M.D."/>
            <person name="Goglin K."/>
            <person name="Molyneaux N."/>
            <person name="Hujer K.M."/>
            <person name="Lavender H."/>
            <person name="Jamison J.J."/>
            <person name="MacDonald I.J."/>
            <person name="Martin K.M."/>
            <person name="Russo T."/>
            <person name="Campagnari A.A."/>
            <person name="Hujer A.M."/>
            <person name="Bonomo R.A."/>
            <person name="Gill S.R."/>
        </authorList>
    </citation>
    <scope>NUCLEOTIDE SEQUENCE [LARGE SCALE GENOMIC DNA]</scope>
    <source>
        <strain>AB0057</strain>
    </source>
</reference>
<evidence type="ECO:0000255" key="1">
    <source>
        <dbReference type="HAMAP-Rule" id="MF_01864"/>
    </source>
</evidence>
<evidence type="ECO:0000255" key="2">
    <source>
        <dbReference type="PROSITE-ProRule" id="PRU01266"/>
    </source>
</evidence>
<comment type="function">
    <text evidence="1">Catalyzes the methylthiolation of N6-(dimethylallyl)adenosine (i(6)A), leading to the formation of 2-methylthio-N6-(dimethylallyl)adenosine (ms(2)i(6)A) at position 37 in tRNAs that read codons beginning with uridine.</text>
</comment>
<comment type="catalytic activity">
    <reaction evidence="1">
        <text>N(6)-dimethylallyladenosine(37) in tRNA + (sulfur carrier)-SH + AH2 + 2 S-adenosyl-L-methionine = 2-methylsulfanyl-N(6)-dimethylallyladenosine(37) in tRNA + (sulfur carrier)-H + 5'-deoxyadenosine + L-methionine + A + S-adenosyl-L-homocysteine + 2 H(+)</text>
        <dbReference type="Rhea" id="RHEA:37067"/>
        <dbReference type="Rhea" id="RHEA-COMP:10375"/>
        <dbReference type="Rhea" id="RHEA-COMP:10376"/>
        <dbReference type="Rhea" id="RHEA-COMP:14737"/>
        <dbReference type="Rhea" id="RHEA-COMP:14739"/>
        <dbReference type="ChEBI" id="CHEBI:13193"/>
        <dbReference type="ChEBI" id="CHEBI:15378"/>
        <dbReference type="ChEBI" id="CHEBI:17319"/>
        <dbReference type="ChEBI" id="CHEBI:17499"/>
        <dbReference type="ChEBI" id="CHEBI:29917"/>
        <dbReference type="ChEBI" id="CHEBI:57844"/>
        <dbReference type="ChEBI" id="CHEBI:57856"/>
        <dbReference type="ChEBI" id="CHEBI:59789"/>
        <dbReference type="ChEBI" id="CHEBI:64428"/>
        <dbReference type="ChEBI" id="CHEBI:74415"/>
        <dbReference type="ChEBI" id="CHEBI:74417"/>
        <dbReference type="EC" id="2.8.4.3"/>
    </reaction>
</comment>
<comment type="cofactor">
    <cofactor evidence="1">
        <name>[4Fe-4S] cluster</name>
        <dbReference type="ChEBI" id="CHEBI:49883"/>
    </cofactor>
    <text evidence="1">Binds 2 [4Fe-4S] clusters. One cluster is coordinated with 3 cysteines and an exchangeable S-adenosyl-L-methionine.</text>
</comment>
<comment type="subunit">
    <text evidence="1">Monomer.</text>
</comment>
<comment type="subcellular location">
    <subcellularLocation>
        <location evidence="1">Cytoplasm</location>
    </subcellularLocation>
</comment>
<comment type="similarity">
    <text evidence="1">Belongs to the methylthiotransferase family. MiaB subfamily.</text>
</comment>
<dbReference type="EC" id="2.8.4.3" evidence="1"/>
<dbReference type="EMBL" id="CP001182">
    <property type="protein sequence ID" value="ACJ42044.1"/>
    <property type="molecule type" value="Genomic_DNA"/>
</dbReference>
<dbReference type="RefSeq" id="WP_000218141.1">
    <property type="nucleotide sequence ID" value="NC_011586.2"/>
</dbReference>
<dbReference type="SMR" id="B7I9D5"/>
<dbReference type="KEGG" id="abn:AB57_3477"/>
<dbReference type="HOGENOM" id="CLU_018697_2_0_6"/>
<dbReference type="Proteomes" id="UP000007094">
    <property type="component" value="Chromosome"/>
</dbReference>
<dbReference type="GO" id="GO:0005829">
    <property type="term" value="C:cytosol"/>
    <property type="evidence" value="ECO:0007669"/>
    <property type="project" value="TreeGrafter"/>
</dbReference>
<dbReference type="GO" id="GO:0051539">
    <property type="term" value="F:4 iron, 4 sulfur cluster binding"/>
    <property type="evidence" value="ECO:0007669"/>
    <property type="project" value="UniProtKB-UniRule"/>
</dbReference>
<dbReference type="GO" id="GO:0046872">
    <property type="term" value="F:metal ion binding"/>
    <property type="evidence" value="ECO:0007669"/>
    <property type="project" value="UniProtKB-KW"/>
</dbReference>
<dbReference type="GO" id="GO:0035597">
    <property type="term" value="F:N6-isopentenyladenosine methylthiotransferase activity"/>
    <property type="evidence" value="ECO:0007669"/>
    <property type="project" value="TreeGrafter"/>
</dbReference>
<dbReference type="CDD" id="cd01335">
    <property type="entry name" value="Radical_SAM"/>
    <property type="match status" value="1"/>
</dbReference>
<dbReference type="FunFam" id="3.40.50.12160:FF:000001">
    <property type="entry name" value="tRNA-2-methylthio-N(6)-dimethylallyladenosine synthase"/>
    <property type="match status" value="1"/>
</dbReference>
<dbReference type="FunFam" id="3.80.30.20:FF:000001">
    <property type="entry name" value="tRNA-2-methylthio-N(6)-dimethylallyladenosine synthase 2"/>
    <property type="match status" value="1"/>
</dbReference>
<dbReference type="Gene3D" id="3.40.50.12160">
    <property type="entry name" value="Methylthiotransferase, N-terminal domain"/>
    <property type="match status" value="1"/>
</dbReference>
<dbReference type="Gene3D" id="3.80.30.20">
    <property type="entry name" value="tm_1862 like domain"/>
    <property type="match status" value="1"/>
</dbReference>
<dbReference type="HAMAP" id="MF_01864">
    <property type="entry name" value="tRNA_metthiotr_MiaB"/>
    <property type="match status" value="1"/>
</dbReference>
<dbReference type="InterPro" id="IPR006638">
    <property type="entry name" value="Elp3/MiaA/NifB-like_rSAM"/>
</dbReference>
<dbReference type="InterPro" id="IPR005839">
    <property type="entry name" value="Methylthiotransferase"/>
</dbReference>
<dbReference type="InterPro" id="IPR020612">
    <property type="entry name" value="Methylthiotransferase_CS"/>
</dbReference>
<dbReference type="InterPro" id="IPR013848">
    <property type="entry name" value="Methylthiotransferase_N"/>
</dbReference>
<dbReference type="InterPro" id="IPR038135">
    <property type="entry name" value="Methylthiotransferase_N_sf"/>
</dbReference>
<dbReference type="InterPro" id="IPR006463">
    <property type="entry name" value="MiaB_methiolase"/>
</dbReference>
<dbReference type="InterPro" id="IPR007197">
    <property type="entry name" value="rSAM"/>
</dbReference>
<dbReference type="InterPro" id="IPR023404">
    <property type="entry name" value="rSAM_horseshoe"/>
</dbReference>
<dbReference type="InterPro" id="IPR002792">
    <property type="entry name" value="TRAM_dom"/>
</dbReference>
<dbReference type="NCBIfam" id="TIGR01574">
    <property type="entry name" value="miaB-methiolase"/>
    <property type="match status" value="1"/>
</dbReference>
<dbReference type="NCBIfam" id="TIGR00089">
    <property type="entry name" value="MiaB/RimO family radical SAM methylthiotransferase"/>
    <property type="match status" value="1"/>
</dbReference>
<dbReference type="PANTHER" id="PTHR43020">
    <property type="entry name" value="CDK5 REGULATORY SUBUNIT-ASSOCIATED PROTEIN 1"/>
    <property type="match status" value="1"/>
</dbReference>
<dbReference type="PANTHER" id="PTHR43020:SF2">
    <property type="entry name" value="MITOCHONDRIAL TRNA METHYLTHIOTRANSFERASE CDK5RAP1"/>
    <property type="match status" value="1"/>
</dbReference>
<dbReference type="Pfam" id="PF04055">
    <property type="entry name" value="Radical_SAM"/>
    <property type="match status" value="1"/>
</dbReference>
<dbReference type="Pfam" id="PF01938">
    <property type="entry name" value="TRAM"/>
    <property type="match status" value="1"/>
</dbReference>
<dbReference type="Pfam" id="PF00919">
    <property type="entry name" value="UPF0004"/>
    <property type="match status" value="1"/>
</dbReference>
<dbReference type="SFLD" id="SFLDF00273">
    <property type="entry name" value="(dimethylallyl)adenosine_tRNA"/>
    <property type="match status" value="1"/>
</dbReference>
<dbReference type="SFLD" id="SFLDG01082">
    <property type="entry name" value="B12-binding_domain_containing"/>
    <property type="match status" value="1"/>
</dbReference>
<dbReference type="SFLD" id="SFLDG01061">
    <property type="entry name" value="methylthiotransferase"/>
    <property type="match status" value="1"/>
</dbReference>
<dbReference type="SMART" id="SM00729">
    <property type="entry name" value="Elp3"/>
    <property type="match status" value="1"/>
</dbReference>
<dbReference type="SUPFAM" id="SSF102114">
    <property type="entry name" value="Radical SAM enzymes"/>
    <property type="match status" value="1"/>
</dbReference>
<dbReference type="PROSITE" id="PS51449">
    <property type="entry name" value="MTTASE_N"/>
    <property type="match status" value="1"/>
</dbReference>
<dbReference type="PROSITE" id="PS01278">
    <property type="entry name" value="MTTASE_RADICAL"/>
    <property type="match status" value="1"/>
</dbReference>
<dbReference type="PROSITE" id="PS51918">
    <property type="entry name" value="RADICAL_SAM"/>
    <property type="match status" value="1"/>
</dbReference>
<dbReference type="PROSITE" id="PS50926">
    <property type="entry name" value="TRAM"/>
    <property type="match status" value="1"/>
</dbReference>
<sequence>MTVQTFIPNGAKAASENTVTQPTHTTDVSIKKLYIETQGCQMNEYDSHRMADLLGDSHGYVLTNNPNEADILLMNTCSIREKAQEKVFSELGRWRKLKEQNPDLVIGVGGCVASQEGDNIQKRAPYVDMIFGPQTLHRLPQMLDQHHAQVEKPKKEKIKLVDISFPDIEKFDFLPEPRVEGFKAFVSIMEGCSKYCSFCVVPYTRGEEVSRPLDDVLAEIAGLAEKGVREISLLGQNVNGYRGETFEGGICTFPELLRLVAEIPGIGRLRYTTSHPLEFSDELIQCYEDLPQMVSHLHLPVQSGSNDVLKAMKRNHTIDVYIDKIAKLRKIRPDMHLSSDFIIGFPGETDENFAETLQFIKDLDFDHSYSFVYSKRPGTPASDLPDTTPEHVKKERLAQVQQVIKQSSIEKTDAMLGKIERVLIEKVSDQDPNILVGTADNTRLVTFVGDASWVGRFAEIEITEIKTLNLVYGELLNLEPDVA</sequence>
<accession>B7I9D5</accession>